<reference key="1">
    <citation type="journal article" date="1992" name="Genes Dev.">
        <title>A novel, activin-inducible, blastopore lip-specific gene of Xenopus laevis contains a fork head DNA-binding domain.</title>
        <authorList>
            <person name="Dirksen M.L."/>
            <person name="Jamrich M."/>
        </authorList>
    </citation>
    <scope>NUCLEOTIDE SEQUENCE [MRNA]</scope>
    <scope>TISSUE SPECIFICITY</scope>
    <scope>DEVELOPMENTAL STAGE</scope>
    <scope>INDUCTION</scope>
    <source>
        <tissue>Embryo</tissue>
    </source>
</reference>
<reference key="2">
    <citation type="journal article" date="1992" name="Mech. Dev.">
        <title>Activin A induced expression of a fork head related gene in posterior chordamesoderm (notochord) of Xenopus laevis embryos.</title>
        <authorList>
            <person name="Knoechel S."/>
            <person name="Lef J."/>
            <person name="Clement J.H."/>
            <person name="Klocke B."/>
            <person name="Hille S."/>
            <person name="Koester M."/>
            <person name="Knoechel W."/>
        </authorList>
    </citation>
    <scope>NUCLEOTIDE SEQUENCE [GENOMIC DNA / MRNA]</scope>
    <source>
        <tissue>Gastrula</tissue>
    </source>
</reference>
<reference key="3">
    <citation type="submission" date="2004-09" db="EMBL/GenBank/DDBJ databases">
        <authorList>
            <consortium name="NIH - Xenopus Gene Collection (XGC) project"/>
        </authorList>
    </citation>
    <scope>NUCLEOTIDE SEQUENCE [LARGE SCALE MRNA]</scope>
    <source>
        <tissue>Gastrula</tissue>
    </source>
</reference>
<reference key="4">
    <citation type="journal article" date="1996" name="EMBO J.">
        <title>Antagonistic actions of activin A and BMP-2/4 control dorsal lip-specific activation of the early response gene XFD-1' in Xenopus laevis embryos.</title>
        <authorList>
            <person name="Kaufmann E."/>
            <person name="Paul H."/>
            <person name="Friedle H."/>
            <person name="Metz A."/>
            <person name="Scheucher M."/>
            <person name="Clement J.H."/>
            <person name="Knoechel W."/>
        </authorList>
    </citation>
    <scope>INDUCTION</scope>
</reference>
<reference key="5">
    <citation type="journal article" date="1998" name="EMBO J.">
        <title>Xvent-1 mediates BMP-4-induced suppression of the dorsal-lip-specific early response gene XFD-1' in Xenopus embryos.</title>
        <authorList>
            <person name="Friedle H."/>
            <person name="Rastegar S."/>
            <person name="Paul H."/>
            <person name="Kaufmann E."/>
            <person name="Knoechel W."/>
        </authorList>
    </citation>
    <scope>INDUCTION</scope>
</reference>
<reference key="6">
    <citation type="journal article" date="2001" name="Int. J. Dev. Biol.">
        <title>Fox (forkhead) genes are involved in the dorso-ventral patterning of the Xenopus mesoderm.</title>
        <authorList>
            <person name="El-Hodiri H."/>
            <person name="Bhatia-Dey N."/>
            <person name="Kenyon K."/>
            <person name="Ault K."/>
            <person name="Dirksen M.-L."/>
            <person name="Jamrich M."/>
        </authorList>
    </citation>
    <scope>PUTATIVE FUNCTION</scope>
    <scope>TISSUE SPECIFICITY</scope>
</reference>
<reference key="7">
    <citation type="journal article" date="2005" name="Gene">
        <title>Of fox and frogs: fox (fork head/winged helix) transcription factors in Xenopus development.</title>
        <authorList>
            <person name="Pohl B.S."/>
            <person name="Knoechel W."/>
        </authorList>
    </citation>
    <scope>REVIEW</scope>
</reference>
<proteinExistence type="evidence at transcript level"/>
<organism>
    <name type="scientific">Xenopus laevis</name>
    <name type="common">African clawed frog</name>
    <dbReference type="NCBI Taxonomy" id="8355"/>
    <lineage>
        <taxon>Eukaryota</taxon>
        <taxon>Metazoa</taxon>
        <taxon>Chordata</taxon>
        <taxon>Craniata</taxon>
        <taxon>Vertebrata</taxon>
        <taxon>Euteleostomi</taxon>
        <taxon>Amphibia</taxon>
        <taxon>Batrachia</taxon>
        <taxon>Anura</taxon>
        <taxon>Pipoidea</taxon>
        <taxon>Pipidae</taxon>
        <taxon>Xenopodinae</taxon>
        <taxon>Xenopus</taxon>
        <taxon>Xenopus</taxon>
    </lineage>
</organism>
<accession>P33206</accession>
<accession>Q640I4</accession>
<feature type="chain" id="PRO_0000091898" description="Forkhead box protein A4-B">
    <location>
        <begin position="1"/>
        <end position="400"/>
    </location>
</feature>
<feature type="DNA-binding region" description="Fork-head" evidence="2">
    <location>
        <begin position="119"/>
        <end position="213"/>
    </location>
</feature>
<feature type="region of interest" description="Disordered" evidence="3">
    <location>
        <begin position="218"/>
        <end position="290"/>
    </location>
</feature>
<feature type="compositionally biased region" description="Basic and acidic residues" evidence="3">
    <location>
        <begin position="218"/>
        <end position="234"/>
    </location>
</feature>
<feature type="compositionally biased region" description="Polar residues" evidence="3">
    <location>
        <begin position="249"/>
        <end position="258"/>
    </location>
</feature>
<feature type="compositionally biased region" description="Polar residues" evidence="3">
    <location>
        <begin position="267"/>
        <end position="277"/>
    </location>
</feature>
<name>FXA4B_XENLA</name>
<dbReference type="EMBL" id="S93559">
    <property type="protein sequence ID" value="AAB22027.1"/>
    <property type="molecule type" value="mRNA"/>
</dbReference>
<dbReference type="EMBL" id="U65750">
    <property type="protein sequence ID" value="AAD03481.1"/>
    <property type="molecule type" value="Genomic_DNA"/>
</dbReference>
<dbReference type="EMBL" id="BC082641">
    <property type="protein sequence ID" value="AAH82641.1"/>
    <property type="molecule type" value="mRNA"/>
</dbReference>
<dbReference type="PIR" id="A42237">
    <property type="entry name" value="A42237"/>
</dbReference>
<dbReference type="RefSeq" id="NP_001081076.1">
    <property type="nucleotide sequence ID" value="NM_001087607.1"/>
</dbReference>
<dbReference type="SMR" id="P33206"/>
<dbReference type="DNASU" id="394368"/>
<dbReference type="GeneID" id="394368"/>
<dbReference type="KEGG" id="xla:394368"/>
<dbReference type="AGR" id="Xenbase:XB-GENE-6254437"/>
<dbReference type="CTD" id="394368"/>
<dbReference type="Xenbase" id="XB-GENE-6254437">
    <property type="gene designation" value="foxa4.S"/>
</dbReference>
<dbReference type="OrthoDB" id="5954824at2759"/>
<dbReference type="Proteomes" id="UP000186698">
    <property type="component" value="Chromosome 4S"/>
</dbReference>
<dbReference type="Bgee" id="394368">
    <property type="expression patterns" value="Expressed in gastrula and 2 other cell types or tissues"/>
</dbReference>
<dbReference type="GO" id="GO:0005634">
    <property type="term" value="C:nucleus"/>
    <property type="evidence" value="ECO:0000303"/>
    <property type="project" value="UniProtKB"/>
</dbReference>
<dbReference type="GO" id="GO:0003677">
    <property type="term" value="F:DNA binding"/>
    <property type="evidence" value="ECO:0000303"/>
    <property type="project" value="UniProtKB"/>
</dbReference>
<dbReference type="GO" id="GO:0003700">
    <property type="term" value="F:DNA-binding transcription factor activity"/>
    <property type="evidence" value="ECO:0000303"/>
    <property type="project" value="UniProtKB"/>
</dbReference>
<dbReference type="GO" id="GO:0000981">
    <property type="term" value="F:DNA-binding transcription factor activity, RNA polymerase II-specific"/>
    <property type="evidence" value="ECO:0000318"/>
    <property type="project" value="GO_Central"/>
</dbReference>
<dbReference type="GO" id="GO:0019904">
    <property type="term" value="F:protein domain specific binding"/>
    <property type="evidence" value="ECO:0007669"/>
    <property type="project" value="InterPro"/>
</dbReference>
<dbReference type="GO" id="GO:0000978">
    <property type="term" value="F:RNA polymerase II cis-regulatory region sequence-specific DNA binding"/>
    <property type="evidence" value="ECO:0000318"/>
    <property type="project" value="GO_Central"/>
</dbReference>
<dbReference type="GO" id="GO:0043565">
    <property type="term" value="F:sequence-specific DNA binding"/>
    <property type="evidence" value="ECO:0000250"/>
    <property type="project" value="UniProtKB"/>
</dbReference>
<dbReference type="GO" id="GO:0009653">
    <property type="term" value="P:anatomical structure morphogenesis"/>
    <property type="evidence" value="ECO:0000318"/>
    <property type="project" value="GO_Central"/>
</dbReference>
<dbReference type="GO" id="GO:0030154">
    <property type="term" value="P:cell differentiation"/>
    <property type="evidence" value="ECO:0000318"/>
    <property type="project" value="GO_Central"/>
</dbReference>
<dbReference type="GO" id="GO:0045892">
    <property type="term" value="P:negative regulation of DNA-templated transcription"/>
    <property type="evidence" value="ECO:0000250"/>
    <property type="project" value="UniProtKB"/>
</dbReference>
<dbReference type="GO" id="GO:0007399">
    <property type="term" value="P:nervous system development"/>
    <property type="evidence" value="ECO:0007669"/>
    <property type="project" value="UniProtKB-KW"/>
</dbReference>
<dbReference type="GO" id="GO:0006355">
    <property type="term" value="P:regulation of DNA-templated transcription"/>
    <property type="evidence" value="ECO:0000303"/>
    <property type="project" value="UniProtKB"/>
</dbReference>
<dbReference type="GO" id="GO:0006357">
    <property type="term" value="P:regulation of transcription by RNA polymerase II"/>
    <property type="evidence" value="ECO:0000318"/>
    <property type="project" value="GO_Central"/>
</dbReference>
<dbReference type="FunFam" id="1.10.10.10:FF:000042">
    <property type="entry name" value="hepatocyte nuclear factor 3-beta"/>
    <property type="match status" value="1"/>
</dbReference>
<dbReference type="Gene3D" id="1.10.10.10">
    <property type="entry name" value="Winged helix-like DNA-binding domain superfamily/Winged helix DNA-binding domain"/>
    <property type="match status" value="1"/>
</dbReference>
<dbReference type="InterPro" id="IPR013638">
    <property type="entry name" value="Fork-head_N"/>
</dbReference>
<dbReference type="InterPro" id="IPR001766">
    <property type="entry name" value="Fork_head_dom"/>
</dbReference>
<dbReference type="InterPro" id="IPR018533">
    <property type="entry name" value="Forkhead_box_C"/>
</dbReference>
<dbReference type="InterPro" id="IPR050211">
    <property type="entry name" value="FOX_domain-containing"/>
</dbReference>
<dbReference type="InterPro" id="IPR018122">
    <property type="entry name" value="TF_fork_head_CS_1"/>
</dbReference>
<dbReference type="InterPro" id="IPR030456">
    <property type="entry name" value="TF_fork_head_CS_2"/>
</dbReference>
<dbReference type="InterPro" id="IPR036388">
    <property type="entry name" value="WH-like_DNA-bd_sf"/>
</dbReference>
<dbReference type="InterPro" id="IPR036390">
    <property type="entry name" value="WH_DNA-bd_sf"/>
</dbReference>
<dbReference type="PANTHER" id="PTHR11829">
    <property type="entry name" value="FORKHEAD BOX PROTEIN"/>
    <property type="match status" value="1"/>
</dbReference>
<dbReference type="PANTHER" id="PTHR11829:SF400">
    <property type="entry name" value="FORKHEAD BOX PROTEIN A4"/>
    <property type="match status" value="1"/>
</dbReference>
<dbReference type="Pfam" id="PF00250">
    <property type="entry name" value="Forkhead"/>
    <property type="match status" value="1"/>
</dbReference>
<dbReference type="Pfam" id="PF08430">
    <property type="entry name" value="Forkhead_N"/>
    <property type="match status" value="1"/>
</dbReference>
<dbReference type="Pfam" id="PF09354">
    <property type="entry name" value="HNF_C"/>
    <property type="match status" value="1"/>
</dbReference>
<dbReference type="PRINTS" id="PR00053">
    <property type="entry name" value="FORKHEAD"/>
</dbReference>
<dbReference type="SMART" id="SM00339">
    <property type="entry name" value="FH"/>
    <property type="match status" value="1"/>
</dbReference>
<dbReference type="SUPFAM" id="SSF46785">
    <property type="entry name" value="Winged helix' DNA-binding domain"/>
    <property type="match status" value="1"/>
</dbReference>
<dbReference type="PROSITE" id="PS00657">
    <property type="entry name" value="FORK_HEAD_1"/>
    <property type="match status" value="1"/>
</dbReference>
<dbReference type="PROSITE" id="PS00658">
    <property type="entry name" value="FORK_HEAD_2"/>
    <property type="match status" value="1"/>
</dbReference>
<dbReference type="PROSITE" id="PS50039">
    <property type="entry name" value="FORK_HEAD_3"/>
    <property type="match status" value="1"/>
</dbReference>
<gene>
    <name type="primary">foxa4-b</name>
    <name type="synonym">fkh1</name>
</gene>
<evidence type="ECO:0000250" key="1"/>
<evidence type="ECO:0000255" key="2">
    <source>
        <dbReference type="PROSITE-ProRule" id="PRU00089"/>
    </source>
</evidence>
<evidence type="ECO:0000256" key="3">
    <source>
        <dbReference type="SAM" id="MobiDB-lite"/>
    </source>
</evidence>
<evidence type="ECO:0000269" key="4">
    <source>
    </source>
</evidence>
<evidence type="ECO:0000269" key="5">
    <source>
    </source>
</evidence>
<evidence type="ECO:0000269" key="6">
    <source>
    </source>
</evidence>
<evidence type="ECO:0000269" key="7">
    <source>
    </source>
</evidence>
<evidence type="ECO:0000305" key="8"/>
<comment type="function">
    <text evidence="1">Transcriptional repressor involved in embryonic nervous system development. Plays a role in the induction and patterning of the anterior-posterior neural axis. Involved in the establishment of floor plate differentiation from neural plate cells during gastrulation. Binds the anf1 promoter sequence to restrict expression of anf1 to the anterior of the neural plate, thereby patterning the forebrain. Can bind to the HNF-3-alpha DNA target sequence. Cooperates with t/bra in a dose-dependent manner to specify dorsal mesoderm formation, including notochord. May be involved in the dorso-ventral patterning of the mesoderm. Binds to DNA via the target sequence 5'-[GA]TAAA[TC]A-3', with 5'-GTAAATA-3' being the preferred binding site (By similarity).</text>
</comment>
<comment type="subcellular location">
    <subcellularLocation>
        <location evidence="8">Nucleus</location>
    </subcellularLocation>
</comment>
<comment type="tissue specificity">
    <text evidence="4 5">Primarily expressed in the dorsal blastopore lip (Spemann organizer) of early gastrulae. At later stages, expressed in the dorsal mesoderm and the neural floor plate. In the dorsal mesoderm, expressed in the notochord but not in the presomitic mesoderm. Also expressed in the mid-brain area.</text>
</comment>
<comment type="developmental stage">
    <text evidence="5">First expressed shortly after the mid blastula transition. Most abundant during gastrulation (stages 10 and 12).</text>
</comment>
<comment type="induction">
    <text evidence="5 6 7">By activin. Down-regulated indirectly by bmp-4 signaling, mediated via vent1.</text>
</comment>
<protein>
    <recommendedName>
        <fullName>Forkhead box protein A4-B</fullName>
        <shortName>FoxA4-B</shortName>
        <shortName>FoxA4b</shortName>
    </recommendedName>
    <alternativeName>
        <fullName>Fork head domain-related protein 1'</fullName>
        <shortName>FKH-1</shortName>
        <shortName>Forkhead protein 1</shortName>
        <shortName>xFD-1'</shortName>
        <shortName>xFKH1</shortName>
    </alternativeName>
</protein>
<keyword id="KW-0217">Developmental protein</keyword>
<keyword id="KW-0221">Differentiation</keyword>
<keyword id="KW-0238">DNA-binding</keyword>
<keyword id="KW-0524">Neurogenesis</keyword>
<keyword id="KW-0539">Nucleus</keyword>
<keyword id="KW-1185">Reference proteome</keyword>
<keyword id="KW-0678">Repressor</keyword>
<keyword id="KW-0804">Transcription</keyword>
<keyword id="KW-0805">Transcription regulation</keyword>
<sequence>MLNRVKLELKDPMDWNTMYQENEIYSGIHNMTNGLPSNSFLPTDVPTVTSSMTYMSNGLPGPVASIQGNLGSLGSMTQGMVGSLAPPPSTSAYPLGYCQGESEFQRDPRTYRRNYSHAKPPYSYISLITMAIQQAPNKMMTLNEIYQWIVDLFPYYRQNQQRWQNSIRHSLSFNDCFIKVPRSPEKPGKGSYWTLHPESGNMFENGCYLRRQKRFKCERSKSGEGERKGNKPGDETGGSLKETPVSFDDCSSSRSPQAAVNDGGRDSTGSSIHQATGGSPVGFSPTSEQAGTASQLMYPLGLSNDGYLGLVGEDVHLKHDPFSGRHPFSITQLMSSEQDQTYPNKMEMCPTTDHLVHYSNYSSDYHNLVSKNGLDMQTSSSSTDNGYYANMYSRPILSSL</sequence>